<name>GAO1D_WHEAT</name>
<comment type="function">
    <text evidence="4">Key oxidase enzyme in the biosynthesis of gibberellin that catalyzes the conversion of GA12 and GA53 to GA9 and GA20 respectively, via a three-step oxidation at C-20 of the GA skeleton.</text>
</comment>
<comment type="catalytic activity">
    <reaction evidence="4">
        <text>gibberellin A12 + 2 2-oxoglutarate + 3 O2 + H(+) = gibberellin A9 + 2 succinate + 3 CO2 + 2 H2O</text>
        <dbReference type="Rhea" id="RHEA:60772"/>
        <dbReference type="ChEBI" id="CHEBI:15377"/>
        <dbReference type="ChEBI" id="CHEBI:15378"/>
        <dbReference type="ChEBI" id="CHEBI:15379"/>
        <dbReference type="ChEBI" id="CHEBI:16526"/>
        <dbReference type="ChEBI" id="CHEBI:16810"/>
        <dbReference type="ChEBI" id="CHEBI:30031"/>
        <dbReference type="ChEBI" id="CHEBI:58627"/>
        <dbReference type="ChEBI" id="CHEBI:73255"/>
    </reaction>
    <physiologicalReaction direction="left-to-right" evidence="4">
        <dbReference type="Rhea" id="RHEA:60773"/>
    </physiologicalReaction>
</comment>
<comment type="catalytic activity">
    <reaction evidence="4">
        <text>gibberellin A53 + 2 2-oxoglutarate + 3 O2 + H(+) = gibberellin A20 + 2 succinate + 3 CO2 + 2 H2O</text>
        <dbReference type="Rhea" id="RHEA:60796"/>
        <dbReference type="ChEBI" id="CHEBI:15377"/>
        <dbReference type="ChEBI" id="CHEBI:15378"/>
        <dbReference type="ChEBI" id="CHEBI:15379"/>
        <dbReference type="ChEBI" id="CHEBI:16526"/>
        <dbReference type="ChEBI" id="CHEBI:16810"/>
        <dbReference type="ChEBI" id="CHEBI:30031"/>
        <dbReference type="ChEBI" id="CHEBI:58526"/>
        <dbReference type="ChEBI" id="CHEBI:143954"/>
    </reaction>
    <physiologicalReaction direction="left-to-right" evidence="4">
        <dbReference type="Rhea" id="RHEA:60797"/>
    </physiologicalReaction>
</comment>
<comment type="cofactor">
    <cofactor evidence="1">
        <name>Fe cation</name>
        <dbReference type="ChEBI" id="CHEBI:24875"/>
    </cofactor>
</comment>
<comment type="cofactor">
    <cofactor evidence="1">
        <name>L-ascorbate</name>
        <dbReference type="ChEBI" id="CHEBI:38290"/>
    </cofactor>
</comment>
<comment type="biophysicochemical properties">
    <kinetics>
        <KM evidence="4">69 nM for GA12</KM>
        <KM evidence="4">59 nM for GA53</KM>
        <KM evidence="4">367 nM for GA15</KM>
        <KM evidence="4">3993 nM for GA44</KM>
        <KM evidence="4">820 nM for GA24</KM>
        <KM evidence="4">8640 nM for GA19</KM>
    </kinetics>
</comment>
<comment type="tissue specificity">
    <text evidence="4">Expressed in nodes and the ear of the elongating stem.</text>
</comment>
<comment type="developmental stage">
    <text evidence="4">Highly expressed in the embryo and the surrounding maternal tissues, the pericarp and the integuments. Also found in the germinating grain.</text>
</comment>
<comment type="similarity">
    <text evidence="5">Belongs to the iron/ascorbate-dependent oxidoreductase family. GA20OX subfamily.</text>
</comment>
<protein>
    <recommendedName>
        <fullName>Gibberellin 20 oxidase 1-D</fullName>
        <ecNumber evidence="4">1.14.11.-</ecNumber>
    </recommendedName>
    <alternativeName>
        <fullName>GA 20-oxidase 1-D</fullName>
    </alternativeName>
    <alternativeName>
        <fullName>Gibberellin C-20 oxidase 1-D</fullName>
    </alternativeName>
    <alternativeName>
        <fullName>Protein Wga20</fullName>
    </alternativeName>
    <alternativeName>
        <fullName>TaGA20ox1-D</fullName>
        <shortName>Ta20ox1D</shortName>
    </alternativeName>
</protein>
<proteinExistence type="evidence at protein level"/>
<keyword id="KW-0408">Iron</keyword>
<keyword id="KW-0479">Metal-binding</keyword>
<keyword id="KW-0560">Oxidoreductase</keyword>
<keyword id="KW-1185">Reference proteome</keyword>
<evidence type="ECO:0000250" key="1"/>
<evidence type="ECO:0000255" key="2"/>
<evidence type="ECO:0000255" key="3">
    <source>
        <dbReference type="PROSITE-ProRule" id="PRU00805"/>
    </source>
</evidence>
<evidence type="ECO:0000269" key="4">
    <source>
    </source>
</evidence>
<evidence type="ECO:0000305" key="5"/>
<reference key="1">
    <citation type="journal article" date="2006" name="Planta">
        <title>Function and transcript analysis of gibberellin-biosynthetic enzymes in wheat.</title>
        <authorList>
            <person name="Appleford N.E."/>
            <person name="Evans D.J."/>
            <person name="Lenton J.R."/>
            <person name="Gaskin P."/>
            <person name="Croker S.J."/>
            <person name="Devos K.M."/>
            <person name="Phillips A.L."/>
            <person name="Hedden P."/>
        </authorList>
    </citation>
    <scope>NUCLEOTIDE SEQUENCE [MRNA]</scope>
    <scope>FUNCTION</scope>
    <scope>CATALYTIC ACTIVITY</scope>
    <scope>TISSUE SPECIFICITY</scope>
    <scope>DEVELOPMENTAL STAGE</scope>
    <scope>BIOPHYSICOCHEMICAL PROPERTIES</scope>
    <source>
        <strain>cv. Maris Huntsman</strain>
        <tissue>Scutellum</tissue>
    </source>
</reference>
<reference key="2">
    <citation type="submission" date="1997-07" db="EMBL/GenBank/DDBJ databases">
        <title>Characterization of a gibberellin 20-oxidase gene from wheat and its expression in trangenic rice.</title>
        <authorList>
            <person name="Youssefian S."/>
        </authorList>
    </citation>
    <scope>NUCLEOTIDE SEQUENCE [MRNA]</scope>
    <source>
        <strain>cv. April Bearded</strain>
        <tissue>Leaf</tissue>
    </source>
</reference>
<feature type="chain" id="PRO_0000219520" description="Gibberellin 20 oxidase 1-D">
    <location>
        <begin position="1"/>
        <end position="361"/>
    </location>
</feature>
<feature type="domain" description="Fe2OG dioxygenase" evidence="3">
    <location>
        <begin position="199"/>
        <end position="299"/>
    </location>
</feature>
<feature type="active site" evidence="2">
    <location>
        <position position="290"/>
    </location>
</feature>
<feature type="binding site" evidence="3">
    <location>
        <position position="224"/>
    </location>
    <ligand>
        <name>Fe cation</name>
        <dbReference type="ChEBI" id="CHEBI:24875"/>
    </ligand>
</feature>
<feature type="binding site" evidence="3">
    <location>
        <position position="226"/>
    </location>
    <ligand>
        <name>Fe cation</name>
        <dbReference type="ChEBI" id="CHEBI:24875"/>
    </ligand>
</feature>
<feature type="binding site" evidence="3">
    <location>
        <position position="280"/>
    </location>
    <ligand>
        <name>Fe cation</name>
        <dbReference type="ChEBI" id="CHEBI:24875"/>
    </ligand>
</feature>
<gene>
    <name type="primary">GA20ox1D</name>
    <name type="synonym">wga20</name>
</gene>
<dbReference type="EC" id="1.14.11.-" evidence="4"/>
<dbReference type="EMBL" id="Y14007">
    <property type="protein sequence ID" value="CAA74330.1"/>
    <property type="molecule type" value="mRNA"/>
</dbReference>
<dbReference type="EMBL" id="AB005555">
    <property type="protein sequence ID" value="BAA21480.1"/>
    <property type="molecule type" value="mRNA"/>
</dbReference>
<dbReference type="PIR" id="T06330">
    <property type="entry name" value="T06330"/>
</dbReference>
<dbReference type="SMR" id="O04705"/>
<dbReference type="STRING" id="4565.O04705"/>
<dbReference type="PaxDb" id="4565-Traes_5DL_3E77D28A6.1"/>
<dbReference type="EnsemblPlants" id="TraesARI5D03G03189430.1">
    <property type="protein sequence ID" value="TraesARI5D03G03189430.1"/>
    <property type="gene ID" value="TraesARI5D03G03189430"/>
</dbReference>
<dbReference type="EnsemblPlants" id="TraesCAD_scaffold_014185_01G000100.1">
    <property type="protein sequence ID" value="TraesCAD_scaffold_014185_01G000100.1"/>
    <property type="gene ID" value="TraesCAD_scaffold_014185_01G000100"/>
</dbReference>
<dbReference type="EnsemblPlants" id="TraesCLE_scaffold_009231_01G000100.1">
    <property type="protein sequence ID" value="TraesCLE_scaffold_009231_01G000100.1"/>
    <property type="gene ID" value="TraesCLE_scaffold_009231_01G000100"/>
</dbReference>
<dbReference type="EnsemblPlants" id="TraesCS5D02G566200.1">
    <property type="protein sequence ID" value="TraesCS5D02G566200.1"/>
    <property type="gene ID" value="TraesCS5D02G566200"/>
</dbReference>
<dbReference type="EnsemblPlants" id="TraesCS5D03G1210400.1">
    <property type="protein sequence ID" value="TraesCS5D03G1210400.1.CDS"/>
    <property type="gene ID" value="TraesCS5D03G1210400"/>
</dbReference>
<dbReference type="EnsemblPlants" id="TraesJAG5D03G03228320.1">
    <property type="protein sequence ID" value="TraesJAG5D03G03228320.1"/>
    <property type="gene ID" value="TraesJAG5D03G03228320"/>
</dbReference>
<dbReference type="EnsemblPlants" id="TraesJUL5D03G03256660.1">
    <property type="protein sequence ID" value="TraesJUL5D03G03256660.1"/>
    <property type="gene ID" value="TraesJUL5D03G03256660"/>
</dbReference>
<dbReference type="EnsemblPlants" id="TraesKAR5D01G0409880.1">
    <property type="protein sequence ID" value="cds.TraesKAR5D01G0409880.1"/>
    <property type="gene ID" value="TraesKAR5D01G0409880"/>
</dbReference>
<dbReference type="EnsemblPlants" id="TraesLAC5D03G03186780.1">
    <property type="protein sequence ID" value="TraesLAC5D03G03186780.1"/>
    <property type="gene ID" value="TraesLAC5D03G03186780"/>
</dbReference>
<dbReference type="EnsemblPlants" id="TraesLDM5D03G03238480.1">
    <property type="protein sequence ID" value="TraesLDM5D03G03238480.1"/>
    <property type="gene ID" value="TraesLDM5D03G03238480"/>
</dbReference>
<dbReference type="EnsemblPlants" id="TraesMAC5D03G03230440.1">
    <property type="protein sequence ID" value="TraesMAC5D03G03230440.1"/>
    <property type="gene ID" value="TraesMAC5D03G03230440"/>
</dbReference>
<dbReference type="EnsemblPlants" id="TraesNOR5D03G03263540.1">
    <property type="protein sequence ID" value="TraesNOR5D03G03263540.1"/>
    <property type="gene ID" value="TraesNOR5D03G03263540"/>
</dbReference>
<dbReference type="EnsemblPlants" id="TraesPARA_EIv1.0_1885770.1">
    <property type="protein sequence ID" value="TraesPARA_EIv1.0_1885770.1.CDS"/>
    <property type="gene ID" value="TraesPARA_EIv1.0_1885770"/>
</dbReference>
<dbReference type="EnsemblPlants" id="TraesRN5D0101248900.1">
    <property type="protein sequence ID" value="TraesRN5D0101248900.1"/>
    <property type="gene ID" value="TraesRN5D0101248900"/>
</dbReference>
<dbReference type="EnsemblPlants" id="TraesROB_scaffold_019857_01G000200.1">
    <property type="protein sequence ID" value="TraesROB_scaffold_019857_01G000200.1"/>
    <property type="gene ID" value="TraesROB_scaffold_019857_01G000200"/>
</dbReference>
<dbReference type="EnsemblPlants" id="TraesSTA5D03G03222080.1">
    <property type="protein sequence ID" value="TraesSTA5D03G03222080.1"/>
    <property type="gene ID" value="TraesSTA5D03G03222080"/>
</dbReference>
<dbReference type="EnsemblPlants" id="TraesSYM5D03G03172000.1">
    <property type="protein sequence ID" value="TraesSYM5D03G03172000.1"/>
    <property type="gene ID" value="TraesSYM5D03G03172000"/>
</dbReference>
<dbReference type="EnsemblPlants" id="TraesWEE_scaffold_020254_01G000100.1">
    <property type="protein sequence ID" value="TraesWEE_scaffold_020254_01G000100.1"/>
    <property type="gene ID" value="TraesWEE_scaffold_020254_01G000100"/>
</dbReference>
<dbReference type="Gramene" id="TraesARI5D03G03189430.1">
    <property type="protein sequence ID" value="TraesARI5D03G03189430.1"/>
    <property type="gene ID" value="TraesARI5D03G03189430"/>
</dbReference>
<dbReference type="Gramene" id="TraesCAD_scaffold_014185_01G000100.1">
    <property type="protein sequence ID" value="TraesCAD_scaffold_014185_01G000100.1"/>
    <property type="gene ID" value="TraesCAD_scaffold_014185_01G000100"/>
</dbReference>
<dbReference type="Gramene" id="TraesCLE_scaffold_009231_01G000100.1">
    <property type="protein sequence ID" value="TraesCLE_scaffold_009231_01G000100.1"/>
    <property type="gene ID" value="TraesCLE_scaffold_009231_01G000100"/>
</dbReference>
<dbReference type="Gramene" id="TraesCS5D02G566200.1">
    <property type="protein sequence ID" value="TraesCS5D02G566200.1"/>
    <property type="gene ID" value="TraesCS5D02G566200"/>
</dbReference>
<dbReference type="Gramene" id="TraesCS5D03G1210400.1">
    <property type="protein sequence ID" value="TraesCS5D03G1210400.1.CDS"/>
    <property type="gene ID" value="TraesCS5D03G1210400"/>
</dbReference>
<dbReference type="Gramene" id="TraesJAG5D03G03228320.1">
    <property type="protein sequence ID" value="TraesJAG5D03G03228320.1"/>
    <property type="gene ID" value="TraesJAG5D03G03228320"/>
</dbReference>
<dbReference type="Gramene" id="TraesJUL5D03G03256660.1">
    <property type="protein sequence ID" value="TraesJUL5D03G03256660.1"/>
    <property type="gene ID" value="TraesJUL5D03G03256660"/>
</dbReference>
<dbReference type="Gramene" id="TraesKAR5D01G0409880.1">
    <property type="protein sequence ID" value="cds.TraesKAR5D01G0409880.1"/>
    <property type="gene ID" value="TraesKAR5D01G0409880"/>
</dbReference>
<dbReference type="Gramene" id="TraesLAC5D03G03186780.1">
    <property type="protein sequence ID" value="TraesLAC5D03G03186780.1"/>
    <property type="gene ID" value="TraesLAC5D03G03186780"/>
</dbReference>
<dbReference type="Gramene" id="TraesLDM5D03G03238480.1">
    <property type="protein sequence ID" value="TraesLDM5D03G03238480.1"/>
    <property type="gene ID" value="TraesLDM5D03G03238480"/>
</dbReference>
<dbReference type="Gramene" id="TraesMAC5D03G03230440.1">
    <property type="protein sequence ID" value="TraesMAC5D03G03230440.1"/>
    <property type="gene ID" value="TraesMAC5D03G03230440"/>
</dbReference>
<dbReference type="Gramene" id="TraesNOR5D03G03263540.1">
    <property type="protein sequence ID" value="TraesNOR5D03G03263540.1"/>
    <property type="gene ID" value="TraesNOR5D03G03263540"/>
</dbReference>
<dbReference type="Gramene" id="TraesPARA_EIv1.0_1885770.1">
    <property type="protein sequence ID" value="TraesPARA_EIv1.0_1885770.1.CDS"/>
    <property type="gene ID" value="TraesPARA_EIv1.0_1885770"/>
</dbReference>
<dbReference type="Gramene" id="TraesRN5D0101248900.1">
    <property type="protein sequence ID" value="TraesRN5D0101248900.1"/>
    <property type="gene ID" value="TraesRN5D0101248900"/>
</dbReference>
<dbReference type="Gramene" id="TraesROB_scaffold_019857_01G000200.1">
    <property type="protein sequence ID" value="TraesROB_scaffold_019857_01G000200.1"/>
    <property type="gene ID" value="TraesROB_scaffold_019857_01G000200"/>
</dbReference>
<dbReference type="Gramene" id="TraesSTA5D03G03222080.1">
    <property type="protein sequence ID" value="TraesSTA5D03G03222080.1"/>
    <property type="gene ID" value="TraesSTA5D03G03222080"/>
</dbReference>
<dbReference type="Gramene" id="TraesSYM5D03G03172000.1">
    <property type="protein sequence ID" value="TraesSYM5D03G03172000.1"/>
    <property type="gene ID" value="TraesSYM5D03G03172000"/>
</dbReference>
<dbReference type="Gramene" id="TraesWEE_scaffold_020254_01G000100.1">
    <property type="protein sequence ID" value="TraesWEE_scaffold_020254_01G000100.1"/>
    <property type="gene ID" value="TraesWEE_scaffold_020254_01G000100"/>
</dbReference>
<dbReference type="eggNOG" id="KOG0143">
    <property type="taxonomic scope" value="Eukaryota"/>
</dbReference>
<dbReference type="HOGENOM" id="CLU_010119_16_3_1"/>
<dbReference type="OMA" id="GNTPRRY"/>
<dbReference type="OrthoDB" id="288590at2759"/>
<dbReference type="BioCyc" id="MetaCyc:MONOMER-11641"/>
<dbReference type="SABIO-RK" id="O04705"/>
<dbReference type="Proteomes" id="UP000019116">
    <property type="component" value="Chromosome 5D"/>
</dbReference>
<dbReference type="ExpressionAtlas" id="O04705">
    <property type="expression patterns" value="baseline"/>
</dbReference>
<dbReference type="GO" id="GO:0045544">
    <property type="term" value="F:gibberellin 20-oxidase activity"/>
    <property type="evidence" value="ECO:0000318"/>
    <property type="project" value="GO_Central"/>
</dbReference>
<dbReference type="GO" id="GO:0046872">
    <property type="term" value="F:metal ion binding"/>
    <property type="evidence" value="ECO:0007669"/>
    <property type="project" value="UniProtKB-KW"/>
</dbReference>
<dbReference type="GO" id="GO:0009908">
    <property type="term" value="P:flower development"/>
    <property type="evidence" value="ECO:0000318"/>
    <property type="project" value="GO_Central"/>
</dbReference>
<dbReference type="GO" id="GO:0009686">
    <property type="term" value="P:gibberellin biosynthetic process"/>
    <property type="evidence" value="ECO:0000318"/>
    <property type="project" value="GO_Central"/>
</dbReference>
<dbReference type="GO" id="GO:0009416">
    <property type="term" value="P:response to light stimulus"/>
    <property type="evidence" value="ECO:0000318"/>
    <property type="project" value="GO_Central"/>
</dbReference>
<dbReference type="GO" id="GO:0009826">
    <property type="term" value="P:unidimensional cell growth"/>
    <property type="evidence" value="ECO:0000318"/>
    <property type="project" value="GO_Central"/>
</dbReference>
<dbReference type="FunFam" id="2.60.120.330:FF:000003">
    <property type="entry name" value="Gibberellin 20 oxidase 2"/>
    <property type="match status" value="1"/>
</dbReference>
<dbReference type="Gene3D" id="2.60.120.330">
    <property type="entry name" value="B-lactam Antibiotic, Isopenicillin N Synthase, Chain"/>
    <property type="match status" value="1"/>
</dbReference>
<dbReference type="InterPro" id="IPR026992">
    <property type="entry name" value="DIOX_N"/>
</dbReference>
<dbReference type="InterPro" id="IPR044861">
    <property type="entry name" value="IPNS-like_FE2OG_OXY"/>
</dbReference>
<dbReference type="InterPro" id="IPR027443">
    <property type="entry name" value="IPNS-like_sf"/>
</dbReference>
<dbReference type="InterPro" id="IPR050231">
    <property type="entry name" value="Iron_ascorbate_oxido_reductase"/>
</dbReference>
<dbReference type="InterPro" id="IPR005123">
    <property type="entry name" value="Oxoglu/Fe-dep_dioxygenase_dom"/>
</dbReference>
<dbReference type="PANTHER" id="PTHR47990">
    <property type="entry name" value="2-OXOGLUTARATE (2OG) AND FE(II)-DEPENDENT OXYGENASE SUPERFAMILY PROTEIN-RELATED"/>
    <property type="match status" value="1"/>
</dbReference>
<dbReference type="Pfam" id="PF03171">
    <property type="entry name" value="2OG-FeII_Oxy"/>
    <property type="match status" value="1"/>
</dbReference>
<dbReference type="Pfam" id="PF14226">
    <property type="entry name" value="DIOX_N"/>
    <property type="match status" value="1"/>
</dbReference>
<dbReference type="SUPFAM" id="SSF51197">
    <property type="entry name" value="Clavaminate synthase-like"/>
    <property type="match status" value="1"/>
</dbReference>
<dbReference type="PROSITE" id="PS51471">
    <property type="entry name" value="FE2OG_OXY"/>
    <property type="match status" value="1"/>
</dbReference>
<accession>O04705</accession>
<sequence>MVQPVFDAAVLSGRADIPSQFIWPEGESPTPDAAEELHVPLIDIGGMLSGDPAAAAEVTRLVGEACERHGFFQVVNHGIDAELLADAHRCVDNFFTMPLPEKQRALRHPGESCGYASSFTGRFASKLPWKETLSFRSCPSDPALVVDYIVATLGEDHRRLGEVYARYCSEMSRLSLEIMEVLGESLGVGRAHYRRFFEGNDSIMRLNYYPPCQRPLETLGTGPHCDPTSLTILHQDNVGGLQVHTEGRWRSIRPRADAFVVNIGDTFMALSNGRYKSCLHRAVVNSRVPRKSLAFFLCPEMDKVVAPPGTLVDAANPRAYPDFTWRSLLDFTQKHYRADMKTLEVFSSWIVQQQQPQPART</sequence>
<organism>
    <name type="scientific">Triticum aestivum</name>
    <name type="common">Wheat</name>
    <dbReference type="NCBI Taxonomy" id="4565"/>
    <lineage>
        <taxon>Eukaryota</taxon>
        <taxon>Viridiplantae</taxon>
        <taxon>Streptophyta</taxon>
        <taxon>Embryophyta</taxon>
        <taxon>Tracheophyta</taxon>
        <taxon>Spermatophyta</taxon>
        <taxon>Magnoliopsida</taxon>
        <taxon>Liliopsida</taxon>
        <taxon>Poales</taxon>
        <taxon>Poaceae</taxon>
        <taxon>BOP clade</taxon>
        <taxon>Pooideae</taxon>
        <taxon>Triticodae</taxon>
        <taxon>Triticeae</taxon>
        <taxon>Triticinae</taxon>
        <taxon>Triticum</taxon>
    </lineage>
</organism>